<keyword id="KW-0963">Cytoplasm</keyword>
<keyword id="KW-0238">DNA-binding</keyword>
<keyword id="KW-0408">Iron</keyword>
<keyword id="KW-0479">Metal-binding</keyword>
<keyword id="KW-1185">Reference proteome</keyword>
<keyword id="KW-0678">Repressor</keyword>
<keyword id="KW-0804">Transcription</keyword>
<keyword id="KW-0805">Transcription regulation</keyword>
<keyword id="KW-0862">Zinc</keyword>
<dbReference type="EMBL" id="AF002194">
    <property type="protein sequence ID" value="AAB63370.1"/>
    <property type="molecule type" value="Genomic_DNA"/>
</dbReference>
<dbReference type="EMBL" id="AF012630">
    <property type="protein sequence ID" value="AAB66826.1"/>
    <property type="molecule type" value="Genomic_DNA"/>
</dbReference>
<dbReference type="EMBL" id="AL123456">
    <property type="protein sequence ID" value="CCP44676.1"/>
    <property type="molecule type" value="Genomic_DNA"/>
</dbReference>
<dbReference type="PIR" id="B70519">
    <property type="entry name" value="B70519"/>
</dbReference>
<dbReference type="RefSeq" id="NP_216425.2">
    <property type="nucleotide sequence ID" value="NC_000962.3"/>
</dbReference>
<dbReference type="RefSeq" id="WP_003899076.1">
    <property type="nucleotide sequence ID" value="NZ_NVQJ01000034.1"/>
</dbReference>
<dbReference type="SMR" id="P9WN87"/>
<dbReference type="STRING" id="83332.Rv1909c"/>
<dbReference type="PaxDb" id="83332-Rv1909c"/>
<dbReference type="DNASU" id="885400"/>
<dbReference type="GeneID" id="885400"/>
<dbReference type="KEGG" id="mtu:Rv1909c"/>
<dbReference type="KEGG" id="mtv:RVBD_1909c"/>
<dbReference type="TubercuList" id="Rv1909c"/>
<dbReference type="eggNOG" id="COG0735">
    <property type="taxonomic scope" value="Bacteria"/>
</dbReference>
<dbReference type="InParanoid" id="P9WN87"/>
<dbReference type="OrthoDB" id="5242893at2"/>
<dbReference type="Proteomes" id="UP000001584">
    <property type="component" value="Chromosome"/>
</dbReference>
<dbReference type="GO" id="GO:0005737">
    <property type="term" value="C:cytoplasm"/>
    <property type="evidence" value="ECO:0007669"/>
    <property type="project" value="UniProtKB-SubCell"/>
</dbReference>
<dbReference type="GO" id="GO:0003700">
    <property type="term" value="F:DNA-binding transcription factor activity"/>
    <property type="evidence" value="ECO:0000315"/>
    <property type="project" value="MTBBASE"/>
</dbReference>
<dbReference type="GO" id="GO:0000976">
    <property type="term" value="F:transcription cis-regulatory region binding"/>
    <property type="evidence" value="ECO:0000318"/>
    <property type="project" value="GO_Central"/>
</dbReference>
<dbReference type="GO" id="GO:0008270">
    <property type="term" value="F:zinc ion binding"/>
    <property type="evidence" value="ECO:0000318"/>
    <property type="project" value="GO_Central"/>
</dbReference>
<dbReference type="GO" id="GO:0045892">
    <property type="term" value="P:negative regulation of DNA-templated transcription"/>
    <property type="evidence" value="ECO:0000318"/>
    <property type="project" value="GO_Central"/>
</dbReference>
<dbReference type="GO" id="GO:0006355">
    <property type="term" value="P:regulation of DNA-templated transcription"/>
    <property type="evidence" value="ECO:0000315"/>
    <property type="project" value="MTBBASE"/>
</dbReference>
<dbReference type="GO" id="GO:1900376">
    <property type="term" value="P:regulation of secondary metabolite biosynthetic process"/>
    <property type="evidence" value="ECO:0000318"/>
    <property type="project" value="GO_Central"/>
</dbReference>
<dbReference type="GO" id="GO:0010039">
    <property type="term" value="P:response to iron ion"/>
    <property type="evidence" value="ECO:0000270"/>
    <property type="project" value="MTBBASE"/>
</dbReference>
<dbReference type="GO" id="GO:0006979">
    <property type="term" value="P:response to oxidative stress"/>
    <property type="evidence" value="ECO:0000315"/>
    <property type="project" value="MTBBASE"/>
</dbReference>
<dbReference type="CDD" id="cd07153">
    <property type="entry name" value="Fur_like"/>
    <property type="match status" value="1"/>
</dbReference>
<dbReference type="FunFam" id="3.30.1490.190:FF:000011">
    <property type="entry name" value="Fur family transcriptional regulator"/>
    <property type="match status" value="1"/>
</dbReference>
<dbReference type="FunFam" id="1.10.10.10:FF:000729">
    <property type="entry name" value="Transcriptional regulator FurA"/>
    <property type="match status" value="1"/>
</dbReference>
<dbReference type="Gene3D" id="3.30.1490.190">
    <property type="match status" value="1"/>
</dbReference>
<dbReference type="Gene3D" id="1.10.10.10">
    <property type="entry name" value="Winged helix-like DNA-binding domain superfamily/Winged helix DNA-binding domain"/>
    <property type="match status" value="1"/>
</dbReference>
<dbReference type="InterPro" id="IPR002481">
    <property type="entry name" value="FUR"/>
</dbReference>
<dbReference type="InterPro" id="IPR043135">
    <property type="entry name" value="Fur_C"/>
</dbReference>
<dbReference type="InterPro" id="IPR036388">
    <property type="entry name" value="WH-like_DNA-bd_sf"/>
</dbReference>
<dbReference type="InterPro" id="IPR036390">
    <property type="entry name" value="WH_DNA-bd_sf"/>
</dbReference>
<dbReference type="PANTHER" id="PTHR33202:SF18">
    <property type="entry name" value="TRANSCRIPTIONAL REGULATOR FURA"/>
    <property type="match status" value="1"/>
</dbReference>
<dbReference type="PANTHER" id="PTHR33202">
    <property type="entry name" value="ZINC UPTAKE REGULATION PROTEIN"/>
    <property type="match status" value="1"/>
</dbReference>
<dbReference type="Pfam" id="PF01475">
    <property type="entry name" value="FUR"/>
    <property type="match status" value="1"/>
</dbReference>
<dbReference type="SUPFAM" id="SSF46785">
    <property type="entry name" value="Winged helix' DNA-binding domain"/>
    <property type="match status" value="1"/>
</dbReference>
<accession>P9WN87</accession>
<accession>L0T9L6</accession>
<accession>O07715</accession>
<accession>O07724</accession>
<accession>P0A582</accession>
<gene>
    <name type="primary">furA</name>
    <name type="synonym">fur</name>
    <name type="ordered locus">Rv1909c</name>
    <name type="ORF">MTCY180.09</name>
</gene>
<proteinExistence type="evidence at protein level"/>
<evidence type="ECO:0000250" key="1"/>
<evidence type="ECO:0000269" key="2">
    <source>
    </source>
</evidence>
<evidence type="ECO:0000269" key="3">
    <source>
    </source>
</evidence>
<evidence type="ECO:0000305" key="4"/>
<reference key="1">
    <citation type="submission" date="1997-08" db="EMBL/GenBank/DDBJ databases">
        <authorList>
            <person name="Song J."/>
            <person name="Deretic V."/>
        </authorList>
    </citation>
    <scope>NUCLEOTIDE SEQUENCE [GENOMIC DNA]</scope>
    <source>
        <strain>ATCC 25618 / H37Rv</strain>
    </source>
</reference>
<reference key="2">
    <citation type="journal article" date="1998" name="Nature">
        <title>Deciphering the biology of Mycobacterium tuberculosis from the complete genome sequence.</title>
        <authorList>
            <person name="Cole S.T."/>
            <person name="Brosch R."/>
            <person name="Parkhill J."/>
            <person name="Garnier T."/>
            <person name="Churcher C.M."/>
            <person name="Harris D.E."/>
            <person name="Gordon S.V."/>
            <person name="Eiglmeier K."/>
            <person name="Gas S."/>
            <person name="Barry C.E. III"/>
            <person name="Tekaia F."/>
            <person name="Badcock K."/>
            <person name="Basham D."/>
            <person name="Brown D."/>
            <person name="Chillingworth T."/>
            <person name="Connor R."/>
            <person name="Davies R.M."/>
            <person name="Devlin K."/>
            <person name="Feltwell T."/>
            <person name="Gentles S."/>
            <person name="Hamlin N."/>
            <person name="Holroyd S."/>
            <person name="Hornsby T."/>
            <person name="Jagels K."/>
            <person name="Krogh A."/>
            <person name="McLean J."/>
            <person name="Moule S."/>
            <person name="Murphy L.D."/>
            <person name="Oliver S."/>
            <person name="Osborne J."/>
            <person name="Quail M.A."/>
            <person name="Rajandream M.A."/>
            <person name="Rogers J."/>
            <person name="Rutter S."/>
            <person name="Seeger K."/>
            <person name="Skelton S."/>
            <person name="Squares S."/>
            <person name="Squares R."/>
            <person name="Sulston J.E."/>
            <person name="Taylor K."/>
            <person name="Whitehead S."/>
            <person name="Barrell B.G."/>
        </authorList>
    </citation>
    <scope>NUCLEOTIDE SEQUENCE [LARGE SCALE GENOMIC DNA]</scope>
    <source>
        <strain>ATCC 25618 / H37Rv</strain>
    </source>
</reference>
<reference key="3">
    <citation type="journal article" date="2001" name="Mol. Microbiol.">
        <title>Regulation of catalase-peroxidase (KatG) expression, isoniazid sensitivity and virulence by furA of Mycobacterium tuberculosis.</title>
        <authorList>
            <person name="Pym A.S."/>
            <person name="Domenech P."/>
            <person name="Honore N."/>
            <person name="Song J."/>
            <person name="Deretic V."/>
            <person name="Cole S.T."/>
        </authorList>
    </citation>
    <scope>FUNCTION</scope>
    <scope>INDUCTION</scope>
    <source>
        <strain>ATCC 25618 / H37Rv</strain>
    </source>
</reference>
<reference key="4">
    <citation type="journal article" date="2003" name="J. Bacteriol.">
        <title>Mycobacterium tuberculosis FurA autoregulates its own expression.</title>
        <authorList>
            <person name="Sala C."/>
            <person name="Forti F."/>
            <person name="Di Florio E."/>
            <person name="Canneva F."/>
            <person name="Milano A."/>
            <person name="Riccardi G."/>
            <person name="Ghisotti D."/>
        </authorList>
    </citation>
    <scope>FUNCTION</scope>
    <scope>DNA-BINDING</scope>
    <scope>INDUCTION</scope>
    <source>
        <strain>ATCC 25618 / H37Rv</strain>
    </source>
</reference>
<reference key="5">
    <citation type="journal article" date="2011" name="Mol. Cell. Proteomics">
        <title>Proteogenomic analysis of Mycobacterium tuberculosis by high resolution mass spectrometry.</title>
        <authorList>
            <person name="Kelkar D.S."/>
            <person name="Kumar D."/>
            <person name="Kumar P."/>
            <person name="Balakrishnan L."/>
            <person name="Muthusamy B."/>
            <person name="Yadav A.K."/>
            <person name="Shrivastava P."/>
            <person name="Marimuthu A."/>
            <person name="Anand S."/>
            <person name="Sundaram H."/>
            <person name="Kingsbury R."/>
            <person name="Harsha H.C."/>
            <person name="Nair B."/>
            <person name="Prasad T.S."/>
            <person name="Chauhan D.S."/>
            <person name="Katoch K."/>
            <person name="Katoch V.M."/>
            <person name="Kumar P."/>
            <person name="Chaerkady R."/>
            <person name="Ramachandran S."/>
            <person name="Dash D."/>
            <person name="Pandey A."/>
        </authorList>
    </citation>
    <scope>IDENTIFICATION BY MASS SPECTROMETRY [LARGE SCALE ANALYSIS]</scope>
    <source>
        <strain>ATCC 25618 / H37Rv</strain>
    </source>
</reference>
<name>FURA_MYCTU</name>
<organism>
    <name type="scientific">Mycobacterium tuberculosis (strain ATCC 25618 / H37Rv)</name>
    <dbReference type="NCBI Taxonomy" id="83332"/>
    <lineage>
        <taxon>Bacteria</taxon>
        <taxon>Bacillati</taxon>
        <taxon>Actinomycetota</taxon>
        <taxon>Actinomycetes</taxon>
        <taxon>Mycobacteriales</taxon>
        <taxon>Mycobacteriaceae</taxon>
        <taxon>Mycobacterium</taxon>
        <taxon>Mycobacterium tuberculosis complex</taxon>
    </lineage>
</organism>
<comment type="function">
    <text evidence="2 3">Represses transcription of the catalase-peroxidase gene katG and its own transcription by binding to the promoter region in a redox-dependent manner.</text>
</comment>
<comment type="subunit">
    <text evidence="1">Homodimer.</text>
</comment>
<comment type="subcellular location">
    <subcellularLocation>
        <location evidence="1">Cytoplasm</location>
    </subcellularLocation>
</comment>
<comment type="induction">
    <text evidence="2 3">Negatively autoregulated.</text>
</comment>
<comment type="similarity">
    <text evidence="4">Belongs to the Fur family.</text>
</comment>
<sequence length="147" mass="15892">MSSIPDYAEQLRTADLRVTRPRVAVLEAVNAHPHADTETIFGAVRFALPDVSRQAVYDVLHALTAAGLVRKIQPSGSVARYESRVGDNHHHIVCRSCGVIADVDCAVGEAPCLTASDHNGFLLDEAEVIYWGLCPDCSISDTSRSHP</sequence>
<feature type="chain" id="PRO_0000095562" description="Transcriptional regulator FurA">
    <location>
        <begin position="1"/>
        <end position="147"/>
    </location>
</feature>
<feature type="region of interest" description="DNA-binding" evidence="1">
    <location>
        <begin position="1"/>
        <end position="85"/>
    </location>
</feature>
<feature type="region of interest" description="Dimerization" evidence="1">
    <location>
        <begin position="86"/>
        <end position="147"/>
    </location>
</feature>
<feature type="binding site" evidence="1">
    <location>
        <position position="34"/>
    </location>
    <ligand>
        <name>Zn(2+)</name>
        <dbReference type="ChEBI" id="CHEBI:29105"/>
    </ligand>
</feature>
<feature type="binding site" evidence="1">
    <location>
        <position position="82"/>
    </location>
    <ligand>
        <name>Zn(2+)</name>
        <dbReference type="ChEBI" id="CHEBI:29105"/>
    </ligand>
</feature>
<feature type="binding site" evidence="1">
    <location>
        <position position="87"/>
    </location>
    <ligand>
        <name>Fe cation</name>
        <dbReference type="ChEBI" id="CHEBI:24875"/>
    </ligand>
</feature>
<feature type="binding site" evidence="1">
    <location>
        <position position="89"/>
    </location>
    <ligand>
        <name>Fe cation</name>
        <dbReference type="ChEBI" id="CHEBI:24875"/>
    </ligand>
</feature>
<feature type="binding site" evidence="1">
    <location>
        <position position="91"/>
    </location>
    <ligand>
        <name>Zn(2+)</name>
        <dbReference type="ChEBI" id="CHEBI:29105"/>
    </ligand>
</feature>
<feature type="binding site" evidence="1">
    <location>
        <position position="94"/>
    </location>
    <ligand>
        <name>Zn(2+)</name>
        <dbReference type="ChEBI" id="CHEBI:29105"/>
    </ligand>
</feature>
<feature type="binding site" evidence="1">
    <location>
        <position position="97"/>
    </location>
    <ligand>
        <name>Zn(2+)</name>
        <dbReference type="ChEBI" id="CHEBI:29105"/>
    </ligand>
</feature>
<feature type="binding site" evidence="1">
    <location>
        <position position="102"/>
    </location>
    <ligand>
        <name>Zn(2+)</name>
        <dbReference type="ChEBI" id="CHEBI:29105"/>
    </ligand>
</feature>
<feature type="binding site" evidence="1">
    <location>
        <position position="109"/>
    </location>
    <ligand>
        <name>Fe cation</name>
        <dbReference type="ChEBI" id="CHEBI:24875"/>
    </ligand>
</feature>
<protein>
    <recommendedName>
        <fullName>Transcriptional regulator FurA</fullName>
    </recommendedName>
</protein>